<gene>
    <name type="primary">Epha3</name>
    <name type="synonym">Rek4</name>
    <name type="synonym">Tyro4</name>
</gene>
<organism>
    <name type="scientific">Rattus norvegicus</name>
    <name type="common">Rat</name>
    <dbReference type="NCBI Taxonomy" id="10116"/>
    <lineage>
        <taxon>Eukaryota</taxon>
        <taxon>Metazoa</taxon>
        <taxon>Chordata</taxon>
        <taxon>Craniata</taxon>
        <taxon>Vertebrata</taxon>
        <taxon>Euteleostomi</taxon>
        <taxon>Mammalia</taxon>
        <taxon>Eutheria</taxon>
        <taxon>Euarchontoglires</taxon>
        <taxon>Glires</taxon>
        <taxon>Rodentia</taxon>
        <taxon>Myomorpha</taxon>
        <taxon>Muroidea</taxon>
        <taxon>Muridae</taxon>
        <taxon>Murinae</taxon>
        <taxon>Rattus</taxon>
    </lineage>
</organism>
<sequence>MDCHLSILILFGCCVLSCSRELSPQPSNEVNLLDSKTIQGELGWISYPSHGWEEISGVDEHYTPIRTYQVCNVMDHSQNNWLRTNWVPRNSAQKIYVELKFTLRDCNSIPLVLGTCKETFNLYYMESDDDHGVKFLEHQFTKIDTIAADESFTQMDLGDRILKLNTEIREVGPVNKKGFYLAFQDVGACVALVSVRVYFKKCPFTVKNLAMFPDTVPMDSQSLVEVRGSCVNNSKEEDPPRMYCSTEGEWLVPIGKCTCNAGYEERGFICQACRPGFYKALDGVAKCTKCPPHSSTQEDGSMNCRCENNYFRAEKDPPSMACTRPPSAPRNVISNINETSVILDWSWPLDTGGRKDITFNIICKKCGWNVRQCEPCSPNVRFLPRQLGLTNTTVTVTDLLAHTNYTFEIDAINGVSELSSPPRQFAAVSITTNQAAPSPVMTIKKDRTSRNSISLSWQEPEHPNGIILDYEVKYYEKQEQETSYTILRARGTNVTISSLKPDTTYVFQIRARTAAGYGTNSRKFEFENSPDSFSISGENSHVVMIAISAAVAIIVLTVVTYVLVGRFCGYHKSKHSSDEKRLHFGNGHLRLPGLRTYVDPHTYEDPTQAVHEFAKELDATNIAIDKVVGAGEFGEVCSGRLKLPSKKEISVAIKTLKVGYTEKQRRDFLGEASIMGQFDHPNIIRLEGVVTKSKPVMIVTEYMENGSLDSFLRKHDAQFTVIQLVGMLRGIASGMKYLSDMGYVHRDLAARNILINSNLVCKVSDFGLSRVLEDDPEAAYTTRGGKIPVRWTSPEATAYRKFTSASDVWSYGIVLWEVMSYGERPYWEMSNQDVIKAVDEGYRLPLPMDCPAALYQLMLDCWQKDRNNRPKFEQIVSILDKLIRNPGSLKIITSAAARPSNLLLDQSNVDIATFHTTGDWLNGMRTAHCKEIFTGVEYSSCDTIAKISTDDMKKVGVTVVGPQKKIISSIKALETQSKNGPVPV</sequence>
<proteinExistence type="evidence at transcript level"/>
<dbReference type="EC" id="2.7.10.1"/>
<dbReference type="EMBL" id="U69278">
    <property type="protein sequence ID" value="AAC06273.1"/>
    <property type="molecule type" value="mRNA"/>
</dbReference>
<dbReference type="PIR" id="PT0186">
    <property type="entry name" value="PT0186"/>
</dbReference>
<dbReference type="RefSeq" id="NP_113752.1">
    <property type="nucleotide sequence ID" value="NM_031564.1"/>
</dbReference>
<dbReference type="SMR" id="O08680"/>
<dbReference type="FunCoup" id="O08680">
    <property type="interactions" value="381"/>
</dbReference>
<dbReference type="STRING" id="10116.ENSRNOP00000043263"/>
<dbReference type="GlyCosmos" id="O08680">
    <property type="glycosylation" value="5 sites, No reported glycans"/>
</dbReference>
<dbReference type="GlyGen" id="O08680">
    <property type="glycosylation" value="5 sites"/>
</dbReference>
<dbReference type="iPTMnet" id="O08680"/>
<dbReference type="PhosphoSitePlus" id="O08680"/>
<dbReference type="SwissPalm" id="O08680"/>
<dbReference type="PaxDb" id="10116-ENSRNOP00000043263"/>
<dbReference type="GeneID" id="29210"/>
<dbReference type="KEGG" id="rno:29210"/>
<dbReference type="UCSC" id="RGD:68389">
    <property type="organism name" value="rat"/>
</dbReference>
<dbReference type="AGR" id="RGD:68389"/>
<dbReference type="CTD" id="2042"/>
<dbReference type="RGD" id="68389">
    <property type="gene designation" value="Epha3"/>
</dbReference>
<dbReference type="eggNOG" id="KOG0196">
    <property type="taxonomic scope" value="Eukaryota"/>
</dbReference>
<dbReference type="InParanoid" id="O08680"/>
<dbReference type="PhylomeDB" id="O08680"/>
<dbReference type="BRENDA" id="2.7.10.1">
    <property type="organism ID" value="5301"/>
</dbReference>
<dbReference type="Reactome" id="R-RNO-2682334">
    <property type="pathway name" value="EPH-Ephrin signaling"/>
</dbReference>
<dbReference type="Reactome" id="R-RNO-3928663">
    <property type="pathway name" value="EPHA-mediated growth cone collapse"/>
</dbReference>
<dbReference type="Reactome" id="R-RNO-3928665">
    <property type="pathway name" value="EPH-ephrin mediated repulsion of cells"/>
</dbReference>
<dbReference type="PRO" id="PR:O08680"/>
<dbReference type="Proteomes" id="UP000002494">
    <property type="component" value="Unplaced"/>
</dbReference>
<dbReference type="GO" id="GO:0030425">
    <property type="term" value="C:dendrite"/>
    <property type="evidence" value="ECO:0000318"/>
    <property type="project" value="GO_Central"/>
</dbReference>
<dbReference type="GO" id="GO:0005769">
    <property type="term" value="C:early endosome"/>
    <property type="evidence" value="ECO:0000250"/>
    <property type="project" value="UniProtKB"/>
</dbReference>
<dbReference type="GO" id="GO:0098982">
    <property type="term" value="C:GABA-ergic synapse"/>
    <property type="evidence" value="ECO:0000266"/>
    <property type="project" value="RGD"/>
</dbReference>
<dbReference type="GO" id="GO:0005886">
    <property type="term" value="C:plasma membrane"/>
    <property type="evidence" value="ECO:0000250"/>
    <property type="project" value="UniProtKB"/>
</dbReference>
<dbReference type="GO" id="GO:0098793">
    <property type="term" value="C:presynapse"/>
    <property type="evidence" value="ECO:0000266"/>
    <property type="project" value="RGD"/>
</dbReference>
<dbReference type="GO" id="GO:0005524">
    <property type="term" value="F:ATP binding"/>
    <property type="evidence" value="ECO:0007669"/>
    <property type="project" value="UniProtKB-KW"/>
</dbReference>
<dbReference type="GO" id="GO:0005003">
    <property type="term" value="F:ephrin receptor activity"/>
    <property type="evidence" value="ECO:0000266"/>
    <property type="project" value="RGD"/>
</dbReference>
<dbReference type="GO" id="GO:0005004">
    <property type="term" value="F:GPI-linked ephrin receptor activity"/>
    <property type="evidence" value="ECO:0000250"/>
    <property type="project" value="UniProtKB"/>
</dbReference>
<dbReference type="GO" id="GO:0019838">
    <property type="term" value="F:growth factor binding"/>
    <property type="evidence" value="ECO:0000266"/>
    <property type="project" value="RGD"/>
</dbReference>
<dbReference type="GO" id="GO:0005005">
    <property type="term" value="F:transmembrane-ephrin receptor activity"/>
    <property type="evidence" value="ECO:0000318"/>
    <property type="project" value="GO_Central"/>
</dbReference>
<dbReference type="GO" id="GO:0007411">
    <property type="term" value="P:axon guidance"/>
    <property type="evidence" value="ECO:0000318"/>
    <property type="project" value="GO_Central"/>
</dbReference>
<dbReference type="GO" id="GO:0016477">
    <property type="term" value="P:cell migration"/>
    <property type="evidence" value="ECO:0000250"/>
    <property type="project" value="UniProtKB"/>
</dbReference>
<dbReference type="GO" id="GO:0071372">
    <property type="term" value="P:cellular response to follicle-stimulating hormone stimulus"/>
    <property type="evidence" value="ECO:0000266"/>
    <property type="project" value="RGD"/>
</dbReference>
<dbReference type="GO" id="GO:0071347">
    <property type="term" value="P:cellular response to interleukin-1"/>
    <property type="evidence" value="ECO:0000270"/>
    <property type="project" value="RGD"/>
</dbReference>
<dbReference type="GO" id="GO:0071300">
    <property type="term" value="P:cellular response to retinoic acid"/>
    <property type="evidence" value="ECO:0000266"/>
    <property type="project" value="RGD"/>
</dbReference>
<dbReference type="GO" id="GO:0003197">
    <property type="term" value="P:endocardial cushion development"/>
    <property type="evidence" value="ECO:0000266"/>
    <property type="project" value="RGD"/>
</dbReference>
<dbReference type="GO" id="GO:0048013">
    <property type="term" value="P:ephrin receptor signaling pathway"/>
    <property type="evidence" value="ECO:0000250"/>
    <property type="project" value="UniProtKB"/>
</dbReference>
<dbReference type="GO" id="GO:0097156">
    <property type="term" value="P:fasciculation of motor neuron axon"/>
    <property type="evidence" value="ECO:0000250"/>
    <property type="project" value="UniProtKB"/>
</dbReference>
<dbReference type="GO" id="GO:0097155">
    <property type="term" value="P:fasciculation of sensory neuron axon"/>
    <property type="evidence" value="ECO:0000250"/>
    <property type="project" value="UniProtKB"/>
</dbReference>
<dbReference type="GO" id="GO:0001660">
    <property type="term" value="P:fever generation"/>
    <property type="evidence" value="ECO:0000270"/>
    <property type="project" value="RGD"/>
</dbReference>
<dbReference type="GO" id="GO:0045806">
    <property type="term" value="P:negative regulation of endocytosis"/>
    <property type="evidence" value="ECO:0000266"/>
    <property type="project" value="RGD"/>
</dbReference>
<dbReference type="GO" id="GO:0010977">
    <property type="term" value="P:negative regulation of neuron projection development"/>
    <property type="evidence" value="ECO:0000266"/>
    <property type="project" value="RGD"/>
</dbReference>
<dbReference type="GO" id="GO:0010976">
    <property type="term" value="P:positive regulation of neuron projection development"/>
    <property type="evidence" value="ECO:0000266"/>
    <property type="project" value="RGD"/>
</dbReference>
<dbReference type="GO" id="GO:1903078">
    <property type="term" value="P:positive regulation of protein localization to plasma membrane"/>
    <property type="evidence" value="ECO:0000266"/>
    <property type="project" value="RGD"/>
</dbReference>
<dbReference type="GO" id="GO:0032956">
    <property type="term" value="P:regulation of actin cytoskeleton organization"/>
    <property type="evidence" value="ECO:0000250"/>
    <property type="project" value="UniProtKB"/>
</dbReference>
<dbReference type="GO" id="GO:0030334">
    <property type="term" value="P:regulation of cell migration"/>
    <property type="evidence" value="ECO:0000266"/>
    <property type="project" value="RGD"/>
</dbReference>
<dbReference type="GO" id="GO:0010717">
    <property type="term" value="P:regulation of epithelial to mesenchymal transition"/>
    <property type="evidence" value="ECO:0000250"/>
    <property type="project" value="UniProtKB"/>
</dbReference>
<dbReference type="GO" id="GO:0051893">
    <property type="term" value="P:regulation of focal adhesion assembly"/>
    <property type="evidence" value="ECO:0000250"/>
    <property type="project" value="UniProtKB"/>
</dbReference>
<dbReference type="GO" id="GO:0043087">
    <property type="term" value="P:regulation of GTPase activity"/>
    <property type="evidence" value="ECO:0000250"/>
    <property type="project" value="UniProtKB"/>
</dbReference>
<dbReference type="GO" id="GO:0070507">
    <property type="term" value="P:regulation of microtubule cytoskeleton organization"/>
    <property type="evidence" value="ECO:0000250"/>
    <property type="project" value="UniProtKB"/>
</dbReference>
<dbReference type="GO" id="GO:0032496">
    <property type="term" value="P:response to lipopolysaccharide"/>
    <property type="evidence" value="ECO:0000270"/>
    <property type="project" value="RGD"/>
</dbReference>
<dbReference type="GO" id="GO:0099560">
    <property type="term" value="P:synaptic membrane adhesion"/>
    <property type="evidence" value="ECO:0000266"/>
    <property type="project" value="RGD"/>
</dbReference>
<dbReference type="CDD" id="cd10481">
    <property type="entry name" value="EphR_LBD_A3"/>
    <property type="match status" value="1"/>
</dbReference>
<dbReference type="CDD" id="cd00063">
    <property type="entry name" value="FN3"/>
    <property type="match status" value="2"/>
</dbReference>
<dbReference type="CDD" id="cd05066">
    <property type="entry name" value="PTKc_EphR_A"/>
    <property type="match status" value="1"/>
</dbReference>
<dbReference type="CDD" id="cd09544">
    <property type="entry name" value="SAM_EPH-A3"/>
    <property type="match status" value="1"/>
</dbReference>
<dbReference type="FunFam" id="1.10.150.50:FF:000046">
    <property type="entry name" value="ephrin type-A receptor 3"/>
    <property type="match status" value="1"/>
</dbReference>
<dbReference type="FunFam" id="2.60.40.10:FF:000041">
    <property type="entry name" value="ephrin type-A receptor 3"/>
    <property type="match status" value="1"/>
</dbReference>
<dbReference type="FunFam" id="1.10.510.10:FF:000019">
    <property type="entry name" value="Ephrin type-A receptor 5"/>
    <property type="match status" value="1"/>
</dbReference>
<dbReference type="FunFam" id="2.10.50.10:FF:000001">
    <property type="entry name" value="Ephrin type-A receptor 5"/>
    <property type="match status" value="1"/>
</dbReference>
<dbReference type="FunFam" id="2.60.40.10:FF:000045">
    <property type="entry name" value="Ephrin type-A receptor 5"/>
    <property type="match status" value="1"/>
</dbReference>
<dbReference type="FunFam" id="2.60.40.1770:FF:000001">
    <property type="entry name" value="Ephrin type-A receptor 5"/>
    <property type="match status" value="1"/>
</dbReference>
<dbReference type="FunFam" id="3.30.200.20:FF:000001">
    <property type="entry name" value="Ephrin type-A receptor 5"/>
    <property type="match status" value="1"/>
</dbReference>
<dbReference type="FunFam" id="2.60.120.260:FF:000001">
    <property type="entry name" value="Ephrin type-A receptor 7"/>
    <property type="match status" value="1"/>
</dbReference>
<dbReference type="Gene3D" id="2.60.40.1770">
    <property type="entry name" value="ephrin a2 ectodomain"/>
    <property type="match status" value="1"/>
</dbReference>
<dbReference type="Gene3D" id="2.60.120.260">
    <property type="entry name" value="Galactose-binding domain-like"/>
    <property type="match status" value="1"/>
</dbReference>
<dbReference type="Gene3D" id="2.60.40.10">
    <property type="entry name" value="Immunoglobulins"/>
    <property type="match status" value="2"/>
</dbReference>
<dbReference type="Gene3D" id="3.30.200.20">
    <property type="entry name" value="Phosphorylase Kinase, domain 1"/>
    <property type="match status" value="1"/>
</dbReference>
<dbReference type="Gene3D" id="1.10.150.50">
    <property type="entry name" value="Transcription Factor, Ets-1"/>
    <property type="match status" value="1"/>
</dbReference>
<dbReference type="Gene3D" id="1.10.510.10">
    <property type="entry name" value="Transferase(Phosphotransferase) domain 1"/>
    <property type="match status" value="1"/>
</dbReference>
<dbReference type="Gene3D" id="2.10.50.10">
    <property type="entry name" value="Tumor Necrosis Factor Receptor, subunit A, domain 2"/>
    <property type="match status" value="1"/>
</dbReference>
<dbReference type="InterPro" id="IPR027936">
    <property type="entry name" value="Eph_TM"/>
</dbReference>
<dbReference type="InterPro" id="IPR034266">
    <property type="entry name" value="EphA3_rcpt_lig-bd"/>
</dbReference>
<dbReference type="InterPro" id="IPR001090">
    <property type="entry name" value="Ephrin_rcpt_lig-bd_dom"/>
</dbReference>
<dbReference type="InterPro" id="IPR050449">
    <property type="entry name" value="Ephrin_rcpt_TKs"/>
</dbReference>
<dbReference type="InterPro" id="IPR003961">
    <property type="entry name" value="FN3_dom"/>
</dbReference>
<dbReference type="InterPro" id="IPR036116">
    <property type="entry name" value="FN3_sf"/>
</dbReference>
<dbReference type="InterPro" id="IPR008979">
    <property type="entry name" value="Galactose-bd-like_sf"/>
</dbReference>
<dbReference type="InterPro" id="IPR009030">
    <property type="entry name" value="Growth_fac_rcpt_cys_sf"/>
</dbReference>
<dbReference type="InterPro" id="IPR013783">
    <property type="entry name" value="Ig-like_fold"/>
</dbReference>
<dbReference type="InterPro" id="IPR011009">
    <property type="entry name" value="Kinase-like_dom_sf"/>
</dbReference>
<dbReference type="InterPro" id="IPR000719">
    <property type="entry name" value="Prot_kinase_dom"/>
</dbReference>
<dbReference type="InterPro" id="IPR017441">
    <property type="entry name" value="Protein_kinase_ATP_BS"/>
</dbReference>
<dbReference type="InterPro" id="IPR001660">
    <property type="entry name" value="SAM"/>
</dbReference>
<dbReference type="InterPro" id="IPR013761">
    <property type="entry name" value="SAM/pointed_sf"/>
</dbReference>
<dbReference type="InterPro" id="IPR001245">
    <property type="entry name" value="Ser-Thr/Tyr_kinase_cat_dom"/>
</dbReference>
<dbReference type="InterPro" id="IPR011641">
    <property type="entry name" value="Tyr-kin_ephrin_A/B_rcpt-like"/>
</dbReference>
<dbReference type="InterPro" id="IPR008266">
    <property type="entry name" value="Tyr_kinase_AS"/>
</dbReference>
<dbReference type="InterPro" id="IPR020635">
    <property type="entry name" value="Tyr_kinase_cat_dom"/>
</dbReference>
<dbReference type="InterPro" id="IPR016257">
    <property type="entry name" value="Tyr_kinase_ephrin_rcpt"/>
</dbReference>
<dbReference type="InterPro" id="IPR001426">
    <property type="entry name" value="Tyr_kinase_rcpt_V_CS"/>
</dbReference>
<dbReference type="PANTHER" id="PTHR46877">
    <property type="entry name" value="EPH RECEPTOR A5"/>
    <property type="match status" value="1"/>
</dbReference>
<dbReference type="PANTHER" id="PTHR46877:SF12">
    <property type="entry name" value="EPHRIN TYPE-A RECEPTOR 3"/>
    <property type="match status" value="1"/>
</dbReference>
<dbReference type="Pfam" id="PF14575">
    <property type="entry name" value="EphA2_TM"/>
    <property type="match status" value="1"/>
</dbReference>
<dbReference type="Pfam" id="PF01404">
    <property type="entry name" value="Ephrin_lbd"/>
    <property type="match status" value="1"/>
</dbReference>
<dbReference type="Pfam" id="PF07699">
    <property type="entry name" value="Ephrin_rec_like"/>
    <property type="match status" value="1"/>
</dbReference>
<dbReference type="Pfam" id="PF00041">
    <property type="entry name" value="fn3"/>
    <property type="match status" value="2"/>
</dbReference>
<dbReference type="Pfam" id="PF07714">
    <property type="entry name" value="PK_Tyr_Ser-Thr"/>
    <property type="match status" value="1"/>
</dbReference>
<dbReference type="Pfam" id="PF07647">
    <property type="entry name" value="SAM_2"/>
    <property type="match status" value="1"/>
</dbReference>
<dbReference type="PIRSF" id="PIRSF000666">
    <property type="entry name" value="TyrPK_ephrin_receptor"/>
    <property type="match status" value="1"/>
</dbReference>
<dbReference type="PRINTS" id="PR00014">
    <property type="entry name" value="FNTYPEIII"/>
</dbReference>
<dbReference type="PRINTS" id="PR00109">
    <property type="entry name" value="TYRKINASE"/>
</dbReference>
<dbReference type="SMART" id="SM00615">
    <property type="entry name" value="EPH_lbd"/>
    <property type="match status" value="1"/>
</dbReference>
<dbReference type="SMART" id="SM01411">
    <property type="entry name" value="Ephrin_rec_like"/>
    <property type="match status" value="1"/>
</dbReference>
<dbReference type="SMART" id="SM00060">
    <property type="entry name" value="FN3"/>
    <property type="match status" value="2"/>
</dbReference>
<dbReference type="SMART" id="SM00454">
    <property type="entry name" value="SAM"/>
    <property type="match status" value="1"/>
</dbReference>
<dbReference type="SMART" id="SM00219">
    <property type="entry name" value="TyrKc"/>
    <property type="match status" value="1"/>
</dbReference>
<dbReference type="SUPFAM" id="SSF49265">
    <property type="entry name" value="Fibronectin type III"/>
    <property type="match status" value="1"/>
</dbReference>
<dbReference type="SUPFAM" id="SSF49785">
    <property type="entry name" value="Galactose-binding domain-like"/>
    <property type="match status" value="1"/>
</dbReference>
<dbReference type="SUPFAM" id="SSF57184">
    <property type="entry name" value="Growth factor receptor domain"/>
    <property type="match status" value="1"/>
</dbReference>
<dbReference type="SUPFAM" id="SSF56112">
    <property type="entry name" value="Protein kinase-like (PK-like)"/>
    <property type="match status" value="1"/>
</dbReference>
<dbReference type="SUPFAM" id="SSF47769">
    <property type="entry name" value="SAM/Pointed domain"/>
    <property type="match status" value="1"/>
</dbReference>
<dbReference type="PROSITE" id="PS01186">
    <property type="entry name" value="EGF_2"/>
    <property type="match status" value="1"/>
</dbReference>
<dbReference type="PROSITE" id="PS51550">
    <property type="entry name" value="EPH_LBD"/>
    <property type="match status" value="1"/>
</dbReference>
<dbReference type="PROSITE" id="PS50853">
    <property type="entry name" value="FN3"/>
    <property type="match status" value="2"/>
</dbReference>
<dbReference type="PROSITE" id="PS00107">
    <property type="entry name" value="PROTEIN_KINASE_ATP"/>
    <property type="match status" value="1"/>
</dbReference>
<dbReference type="PROSITE" id="PS50011">
    <property type="entry name" value="PROTEIN_KINASE_DOM"/>
    <property type="match status" value="1"/>
</dbReference>
<dbReference type="PROSITE" id="PS00109">
    <property type="entry name" value="PROTEIN_KINASE_TYR"/>
    <property type="match status" value="1"/>
</dbReference>
<dbReference type="PROSITE" id="PS00790">
    <property type="entry name" value="RECEPTOR_TYR_KIN_V_1"/>
    <property type="match status" value="1"/>
</dbReference>
<dbReference type="PROSITE" id="PS00791">
    <property type="entry name" value="RECEPTOR_TYR_KIN_V_2"/>
    <property type="match status" value="1"/>
</dbReference>
<dbReference type="PROSITE" id="PS50105">
    <property type="entry name" value="SAM_DOMAIN"/>
    <property type="match status" value="1"/>
</dbReference>
<reference key="1">
    <citation type="journal article" date="1998" name="Am. J. Physiol.">
        <title>IL-1 beta alters the expression of the receptor tyrosine kinase gene r-EphA3 in neonatal rat cardiomyocytes.</title>
        <authorList>
            <person name="Li Y.Y."/>
            <person name="McTiernan C.F."/>
            <person name="Feldman A.M."/>
        </authorList>
    </citation>
    <scope>NUCLEOTIDE SEQUENCE [MRNA]</scope>
    <source>
        <strain>Sprague-Dawley</strain>
    </source>
</reference>
<comment type="function">
    <text evidence="1">Receptor tyrosine kinase which binds promiscuously membrane-bound ephrin family ligands residing on adjacent cells, leading to contact-dependent bidirectional signaling into neighboring cells. The signaling pathway downstream of the receptor is referred to as forward signaling while the signaling pathway downstream of the ephrin ligand is referred to as reverse signaling. Highly promiscuous for ephrin-A ligands it binds preferentially EFNA5. Upon activation by EFNA5 regulates cell-cell adhesion, cytoskeletal organization and cell migration. Plays a role in cardiac cells migration and differentiation and regulates the formation of the atrioventricular canal and septum during development probably through activation by EFNA1. Involved in the retinotectal mapping of neurons. May also control the segregation but not the guidance of motor and sensory axons during neuromuscular circuit development (By similarity).</text>
</comment>
<comment type="catalytic activity">
    <reaction evidence="9">
        <text>L-tyrosyl-[protein] + ATP = O-phospho-L-tyrosyl-[protein] + ADP + H(+)</text>
        <dbReference type="Rhea" id="RHEA:10596"/>
        <dbReference type="Rhea" id="RHEA-COMP:10136"/>
        <dbReference type="Rhea" id="RHEA-COMP:20101"/>
        <dbReference type="ChEBI" id="CHEBI:15378"/>
        <dbReference type="ChEBI" id="CHEBI:30616"/>
        <dbReference type="ChEBI" id="CHEBI:46858"/>
        <dbReference type="ChEBI" id="CHEBI:61978"/>
        <dbReference type="ChEBI" id="CHEBI:456216"/>
        <dbReference type="EC" id="2.7.10.1"/>
    </reaction>
</comment>
<comment type="subunit">
    <text evidence="1">Heterotetramer upon binding of the ligand. The heterotetramer is composed of an ephrin dimer and a receptor dimer. Oligomerization is probably required to induce biological responses. Forms a ternary EFNA5-EPHA3-ADAM10 complex mediating EFNA5 extracellular domain shedding by ADAM10 which regulates the EFNA5-EPHA3 complex internalization and function. Interacts (phosphorylated) with PTPN1; dephosphorylates EPHA3 and may regulate its trafficking and function. Interacts (phosphorylated) with CRK; mediates EFNA5-EPHA3 signaling through RHOA GTPase activation. Interacts with NCK1 (via SH2 domain); mediates EFNA5-EPHA3 signaling (By similarity).</text>
</comment>
<comment type="subcellular location">
    <subcellularLocation>
        <location evidence="3">Cell membrane</location>
        <topology evidence="4">Single-pass type I membrane protein</topology>
    </subcellularLocation>
</comment>
<comment type="tissue specificity">
    <text>Most abundant in the heart, brain and lung.</text>
</comment>
<comment type="induction">
    <text>Down-regulated by IL1-beta in neonatal cardiac myocytes.</text>
</comment>
<comment type="PTM">
    <text evidence="1">Autophosphorylates upon activation by EFNA5. Phosphorylation on Tyr-603 mediates interaction with NCK1. Dephosphorylated by PTPN1 (By similarity).</text>
</comment>
<comment type="similarity">
    <text evidence="5">Belongs to the protein kinase superfamily. Tyr protein kinase family. Ephrin receptor subfamily.</text>
</comment>
<protein>
    <recommendedName>
        <fullName>Ephrin type-A receptor 3</fullName>
        <ecNumber>2.7.10.1</ecNumber>
    </recommendedName>
    <alternativeName>
        <fullName>EPH-like kinase 4</fullName>
        <shortName>EK4</shortName>
        <shortName>rEK4</shortName>
    </alternativeName>
    <alternativeName>
        <fullName>Tyrosine-protein kinase TYRO4</fullName>
    </alternativeName>
</protein>
<name>EPHA3_RAT</name>
<accession>O08680</accession>
<keyword id="KW-0067">ATP-binding</keyword>
<keyword id="KW-1003">Cell membrane</keyword>
<keyword id="KW-0325">Glycoprotein</keyword>
<keyword id="KW-0418">Kinase</keyword>
<keyword id="KW-0472">Membrane</keyword>
<keyword id="KW-0547">Nucleotide-binding</keyword>
<keyword id="KW-0597">Phosphoprotein</keyword>
<keyword id="KW-0675">Receptor</keyword>
<keyword id="KW-1185">Reference proteome</keyword>
<keyword id="KW-0677">Repeat</keyword>
<keyword id="KW-0732">Signal</keyword>
<keyword id="KW-0808">Transferase</keyword>
<keyword id="KW-0812">Transmembrane</keyword>
<keyword id="KW-1133">Transmembrane helix</keyword>
<keyword id="KW-0829">Tyrosine-protein kinase</keyword>
<evidence type="ECO:0000250" key="1"/>
<evidence type="ECO:0000250" key="2">
    <source>
        <dbReference type="UniProtKB" id="P29319"/>
    </source>
</evidence>
<evidence type="ECO:0000250" key="3">
    <source>
        <dbReference type="UniProtKB" id="P29320"/>
    </source>
</evidence>
<evidence type="ECO:0000255" key="4"/>
<evidence type="ECO:0000255" key="5">
    <source>
        <dbReference type="PROSITE-ProRule" id="PRU00159"/>
    </source>
</evidence>
<evidence type="ECO:0000255" key="6">
    <source>
        <dbReference type="PROSITE-ProRule" id="PRU00184"/>
    </source>
</evidence>
<evidence type="ECO:0000255" key="7">
    <source>
        <dbReference type="PROSITE-ProRule" id="PRU00316"/>
    </source>
</evidence>
<evidence type="ECO:0000255" key="8">
    <source>
        <dbReference type="PROSITE-ProRule" id="PRU00883"/>
    </source>
</evidence>
<evidence type="ECO:0000255" key="9">
    <source>
        <dbReference type="PROSITE-ProRule" id="PRU10028"/>
    </source>
</evidence>
<feature type="signal peptide" evidence="1">
    <location>
        <begin position="1"/>
        <end position="20"/>
    </location>
</feature>
<feature type="chain" id="PRO_0000016804" description="Ephrin type-A receptor 3">
    <location>
        <begin position="21"/>
        <end position="984"/>
    </location>
</feature>
<feature type="topological domain" description="Extracellular" evidence="4">
    <location>
        <begin position="21"/>
        <end position="541"/>
    </location>
</feature>
<feature type="transmembrane region" description="Helical" evidence="4">
    <location>
        <begin position="542"/>
        <end position="565"/>
    </location>
</feature>
<feature type="topological domain" description="Cytoplasmic" evidence="4">
    <location>
        <begin position="566"/>
        <end position="984"/>
    </location>
</feature>
<feature type="domain" description="Eph LBD" evidence="8">
    <location>
        <begin position="29"/>
        <end position="207"/>
    </location>
</feature>
<feature type="domain" description="Fibronectin type-III 1" evidence="7">
    <location>
        <begin position="325"/>
        <end position="435"/>
    </location>
</feature>
<feature type="domain" description="Fibronectin type-III 2" evidence="7">
    <location>
        <begin position="436"/>
        <end position="532"/>
    </location>
</feature>
<feature type="domain" description="Protein kinase" evidence="5">
    <location>
        <begin position="622"/>
        <end position="883"/>
    </location>
</feature>
<feature type="domain" description="SAM" evidence="6">
    <location>
        <begin position="912"/>
        <end position="976"/>
    </location>
</feature>
<feature type="short sequence motif" description="PDZ-binding" evidence="4">
    <location>
        <begin position="982"/>
        <end position="984"/>
    </location>
</feature>
<feature type="active site" description="Proton acceptor" evidence="5 9">
    <location>
        <position position="747"/>
    </location>
</feature>
<feature type="binding site" evidence="5">
    <location>
        <begin position="629"/>
        <end position="634"/>
    </location>
    <ligand>
        <name>ATP</name>
        <dbReference type="ChEBI" id="CHEBI:30616"/>
    </ligand>
</feature>
<feature type="binding site" evidence="5">
    <location>
        <position position="654"/>
    </location>
    <ligand>
        <name>ATP</name>
        <dbReference type="ChEBI" id="CHEBI:30616"/>
    </ligand>
</feature>
<feature type="binding site" evidence="5">
    <location>
        <begin position="701"/>
        <end position="707"/>
    </location>
    <ligand>
        <name>ATP</name>
        <dbReference type="ChEBI" id="CHEBI:30616"/>
    </ligand>
</feature>
<feature type="binding site" evidence="5">
    <location>
        <begin position="751"/>
        <end position="752"/>
    </location>
    <ligand>
        <name>ATP</name>
        <dbReference type="ChEBI" id="CHEBI:30616"/>
    </ligand>
</feature>
<feature type="modified residue" description="Phosphotyrosine; by autocatalysis" evidence="3">
    <location>
        <position position="597"/>
    </location>
</feature>
<feature type="modified residue" description="Phosphotyrosine; by autocatalysis" evidence="3">
    <location>
        <position position="603"/>
    </location>
</feature>
<feature type="modified residue" description="Phosphotyrosine; by autocatalysis" evidence="3">
    <location>
        <position position="702"/>
    </location>
</feature>
<feature type="modified residue" description="Phosphotyrosine; by autocatalysis" evidence="3">
    <location>
        <position position="780"/>
    </location>
</feature>
<feature type="modified residue" description="Phosphotyrosine" evidence="2">
    <location>
        <position position="938"/>
    </location>
</feature>
<feature type="glycosylation site" description="N-linked (GlcNAc...) asparagine" evidence="4">
    <location>
        <position position="232"/>
    </location>
</feature>
<feature type="glycosylation site" description="N-linked (GlcNAc...) asparagine" evidence="4">
    <location>
        <position position="337"/>
    </location>
</feature>
<feature type="glycosylation site" description="N-linked (GlcNAc...) asparagine" evidence="4">
    <location>
        <position position="391"/>
    </location>
</feature>
<feature type="glycosylation site" description="N-linked (GlcNAc...) asparagine" evidence="4">
    <location>
        <position position="404"/>
    </location>
</feature>
<feature type="glycosylation site" description="N-linked (GlcNAc...) asparagine" evidence="4">
    <location>
        <position position="493"/>
    </location>
</feature>